<protein>
    <recommendedName>
        <fullName>Histone acetyltransferase type B catalytic subunit</fullName>
        <ecNumber evidence="3">2.3.1.48</ecNumber>
    </recommendedName>
</protein>
<organism>
    <name type="scientific">Schizosaccharomyces pombe (strain 972 / ATCC 24843)</name>
    <name type="common">Fission yeast</name>
    <dbReference type="NCBI Taxonomy" id="284812"/>
    <lineage>
        <taxon>Eukaryota</taxon>
        <taxon>Fungi</taxon>
        <taxon>Dikarya</taxon>
        <taxon>Ascomycota</taxon>
        <taxon>Taphrinomycotina</taxon>
        <taxon>Schizosaccharomycetes</taxon>
        <taxon>Schizosaccharomycetales</taxon>
        <taxon>Schizosaccharomycetaceae</taxon>
        <taxon>Schizosaccharomyces</taxon>
    </lineage>
</organism>
<evidence type="ECO:0000250" key="1"/>
<evidence type="ECO:0000250" key="2">
    <source>
        <dbReference type="UniProtKB" id="O14929"/>
    </source>
</evidence>
<evidence type="ECO:0000250" key="3">
    <source>
        <dbReference type="UniProtKB" id="Q12341"/>
    </source>
</evidence>
<evidence type="ECO:0000305" key="4"/>
<name>HAT1_SCHPO</name>
<proteinExistence type="inferred from homology"/>
<reference key="1">
    <citation type="journal article" date="2002" name="Nature">
        <title>The genome sequence of Schizosaccharomyces pombe.</title>
        <authorList>
            <person name="Wood V."/>
            <person name="Gwilliam R."/>
            <person name="Rajandream M.A."/>
            <person name="Lyne M.H."/>
            <person name="Lyne R."/>
            <person name="Stewart A."/>
            <person name="Sgouros J.G."/>
            <person name="Peat N."/>
            <person name="Hayles J."/>
            <person name="Baker S.G."/>
            <person name="Basham D."/>
            <person name="Bowman S."/>
            <person name="Brooks K."/>
            <person name="Brown D."/>
            <person name="Brown S."/>
            <person name="Chillingworth T."/>
            <person name="Churcher C.M."/>
            <person name="Collins M."/>
            <person name="Connor R."/>
            <person name="Cronin A."/>
            <person name="Davis P."/>
            <person name="Feltwell T."/>
            <person name="Fraser A."/>
            <person name="Gentles S."/>
            <person name="Goble A."/>
            <person name="Hamlin N."/>
            <person name="Harris D.E."/>
            <person name="Hidalgo J."/>
            <person name="Hodgson G."/>
            <person name="Holroyd S."/>
            <person name="Hornsby T."/>
            <person name="Howarth S."/>
            <person name="Huckle E.J."/>
            <person name="Hunt S."/>
            <person name="Jagels K."/>
            <person name="James K.D."/>
            <person name="Jones L."/>
            <person name="Jones M."/>
            <person name="Leather S."/>
            <person name="McDonald S."/>
            <person name="McLean J."/>
            <person name="Mooney P."/>
            <person name="Moule S."/>
            <person name="Mungall K.L."/>
            <person name="Murphy L.D."/>
            <person name="Niblett D."/>
            <person name="Odell C."/>
            <person name="Oliver K."/>
            <person name="O'Neil S."/>
            <person name="Pearson D."/>
            <person name="Quail M.A."/>
            <person name="Rabbinowitsch E."/>
            <person name="Rutherford K.M."/>
            <person name="Rutter S."/>
            <person name="Saunders D."/>
            <person name="Seeger K."/>
            <person name="Sharp S."/>
            <person name="Skelton J."/>
            <person name="Simmonds M.N."/>
            <person name="Squares R."/>
            <person name="Squares S."/>
            <person name="Stevens K."/>
            <person name="Taylor K."/>
            <person name="Taylor R.G."/>
            <person name="Tivey A."/>
            <person name="Walsh S.V."/>
            <person name="Warren T."/>
            <person name="Whitehead S."/>
            <person name="Woodward J.R."/>
            <person name="Volckaert G."/>
            <person name="Aert R."/>
            <person name="Robben J."/>
            <person name="Grymonprez B."/>
            <person name="Weltjens I."/>
            <person name="Vanstreels E."/>
            <person name="Rieger M."/>
            <person name="Schaefer M."/>
            <person name="Mueller-Auer S."/>
            <person name="Gabel C."/>
            <person name="Fuchs M."/>
            <person name="Duesterhoeft A."/>
            <person name="Fritzc C."/>
            <person name="Holzer E."/>
            <person name="Moestl D."/>
            <person name="Hilbert H."/>
            <person name="Borzym K."/>
            <person name="Langer I."/>
            <person name="Beck A."/>
            <person name="Lehrach H."/>
            <person name="Reinhardt R."/>
            <person name="Pohl T.M."/>
            <person name="Eger P."/>
            <person name="Zimmermann W."/>
            <person name="Wedler H."/>
            <person name="Wambutt R."/>
            <person name="Purnelle B."/>
            <person name="Goffeau A."/>
            <person name="Cadieu E."/>
            <person name="Dreano S."/>
            <person name="Gloux S."/>
            <person name="Lelaure V."/>
            <person name="Mottier S."/>
            <person name="Galibert F."/>
            <person name="Aves S.J."/>
            <person name="Xiang Z."/>
            <person name="Hunt C."/>
            <person name="Moore K."/>
            <person name="Hurst S.M."/>
            <person name="Lucas M."/>
            <person name="Rochet M."/>
            <person name="Gaillardin C."/>
            <person name="Tallada V.A."/>
            <person name="Garzon A."/>
            <person name="Thode G."/>
            <person name="Daga R.R."/>
            <person name="Cruzado L."/>
            <person name="Jimenez J."/>
            <person name="Sanchez M."/>
            <person name="del Rey F."/>
            <person name="Benito J."/>
            <person name="Dominguez A."/>
            <person name="Revuelta J.L."/>
            <person name="Moreno S."/>
            <person name="Armstrong J."/>
            <person name="Forsburg S.L."/>
            <person name="Cerutti L."/>
            <person name="Lowe T."/>
            <person name="McCombie W.R."/>
            <person name="Paulsen I."/>
            <person name="Potashkin J."/>
            <person name="Shpakovski G.V."/>
            <person name="Ussery D."/>
            <person name="Barrell B.G."/>
            <person name="Nurse P."/>
        </authorList>
    </citation>
    <scope>NUCLEOTIDE SEQUENCE [LARGE SCALE GENOMIC DNA]</scope>
    <source>
        <strain>972 / ATCC 24843</strain>
    </source>
</reference>
<keyword id="KW-0012">Acyltransferase</keyword>
<keyword id="KW-0156">Chromatin regulator</keyword>
<keyword id="KW-0963">Cytoplasm</keyword>
<keyword id="KW-0227">DNA damage</keyword>
<keyword id="KW-0234">DNA repair</keyword>
<keyword id="KW-0539">Nucleus</keyword>
<keyword id="KW-1185">Reference proteome</keyword>
<keyword id="KW-0808">Transferase</keyword>
<sequence length="378" mass="44051">MSAVDEWVHNANECIEIVQVNEKHEKDCQYHPSNTYAIFGDAEVIYGYKDLNVTITYECPLMVPKLEISYSERLAPDSGVEPTDIEGTLNTYLKDRSIKVEGNSFDVHSANSIHNYSFNGKTFKILQATVLEASEIMQHLQIFSLFFIEGGSFIDLNDPRWMVYLLYETTEDDYCLRGYCTVYKYYKWDKLIHDGIRARISQFVILPPFQHQGHGSQLYNAIVSTFLKNPKILDFTVEDASEAFDSLRDHCDYKRLLSMGIFSEPDFHPSLSRQWINSKIAETKLTQRQFSRCCELAFTTKLKKLSLLERKSVRLGIKERIFRQNLDVLLQLDKSERIEKIHNAYENQFDEYKQIVKKLPKLKEDSPRKRQKLAQSSS</sequence>
<gene>
    <name type="primary">hat1</name>
    <name type="ORF">SPAC139.06</name>
    <name type="ORF">SPAC23C4.01</name>
</gene>
<comment type="function">
    <text evidence="3">Catalytic component of the histone acetylase B (HAT-B) complex. Acetylates 'Lys-12' of histone H4 which is required for telomeric silencing. Has intrinsic substrate specificity that modifies lysine in recognition sequence GXGKXG. Involved in DNA double-strand break repair.</text>
</comment>
<comment type="catalytic activity">
    <reaction evidence="3">
        <text>L-lysyl-[protein] + acetyl-CoA = N(6)-acetyl-L-lysyl-[protein] + CoA + H(+)</text>
        <dbReference type="Rhea" id="RHEA:45948"/>
        <dbReference type="Rhea" id="RHEA-COMP:9752"/>
        <dbReference type="Rhea" id="RHEA-COMP:10731"/>
        <dbReference type="ChEBI" id="CHEBI:15378"/>
        <dbReference type="ChEBI" id="CHEBI:29969"/>
        <dbReference type="ChEBI" id="CHEBI:57287"/>
        <dbReference type="ChEBI" id="CHEBI:57288"/>
        <dbReference type="ChEBI" id="CHEBI:61930"/>
        <dbReference type="EC" id="2.3.1.48"/>
    </reaction>
</comment>
<comment type="subunit">
    <text evidence="3">Component of the HAT-B complex composed of at least hat1 and hat2. The HAT-B complex binds to histone H4 tail.</text>
</comment>
<comment type="subcellular location">
    <subcellularLocation>
        <location evidence="1">Cytoplasm</location>
    </subcellularLocation>
    <subcellularLocation>
        <location evidence="1">Nucleus</location>
    </subcellularLocation>
</comment>
<comment type="similarity">
    <text evidence="4">Belongs to the HAT1 family.</text>
</comment>
<accession>Q9UTM7</accession>
<accession>O13922</accession>
<dbReference type="EC" id="2.3.1.48" evidence="3"/>
<dbReference type="EMBL" id="CU329670">
    <property type="protein sequence ID" value="CAB59620.2"/>
    <property type="molecule type" value="Genomic_DNA"/>
</dbReference>
<dbReference type="PIR" id="T37607">
    <property type="entry name" value="T37607"/>
</dbReference>
<dbReference type="PIR" id="T38257">
    <property type="entry name" value="T38257"/>
</dbReference>
<dbReference type="RefSeq" id="NP_593173.2">
    <property type="nucleotide sequence ID" value="NM_001018570.2"/>
</dbReference>
<dbReference type="SMR" id="Q9UTM7"/>
<dbReference type="BioGRID" id="278960">
    <property type="interactions" value="54"/>
</dbReference>
<dbReference type="FunCoup" id="Q9UTM7">
    <property type="interactions" value="807"/>
</dbReference>
<dbReference type="STRING" id="284812.Q9UTM7"/>
<dbReference type="iPTMnet" id="Q9UTM7"/>
<dbReference type="PaxDb" id="4896-SPAC139.06.1"/>
<dbReference type="EnsemblFungi" id="SPAC139.06.1">
    <property type="protein sequence ID" value="SPAC139.06.1:pep"/>
    <property type="gene ID" value="SPAC139.06"/>
</dbReference>
<dbReference type="GeneID" id="2542502"/>
<dbReference type="KEGG" id="spo:2542502"/>
<dbReference type="PomBase" id="SPAC139.06">
    <property type="gene designation" value="hat1"/>
</dbReference>
<dbReference type="VEuPathDB" id="FungiDB:SPAC139.06"/>
<dbReference type="eggNOG" id="KOG2696">
    <property type="taxonomic scope" value="Eukaryota"/>
</dbReference>
<dbReference type="HOGENOM" id="CLU_036024_2_1_1"/>
<dbReference type="InParanoid" id="Q9UTM7"/>
<dbReference type="OMA" id="HNANECI"/>
<dbReference type="PhylomeDB" id="Q9UTM7"/>
<dbReference type="BRENDA" id="2.3.1.48">
    <property type="organism ID" value="5613"/>
</dbReference>
<dbReference type="Reactome" id="R-SPO-3214847">
    <property type="pathway name" value="HATs acetylate histones"/>
</dbReference>
<dbReference type="PRO" id="PR:Q9UTM7"/>
<dbReference type="Proteomes" id="UP000002485">
    <property type="component" value="Chromosome I"/>
</dbReference>
<dbReference type="GO" id="GO:0000785">
    <property type="term" value="C:chromatin"/>
    <property type="evidence" value="ECO:0000314"/>
    <property type="project" value="PomBase"/>
</dbReference>
<dbReference type="GO" id="GO:0000781">
    <property type="term" value="C:chromosome, telomeric region"/>
    <property type="evidence" value="ECO:0007669"/>
    <property type="project" value="GOC"/>
</dbReference>
<dbReference type="GO" id="GO:0005737">
    <property type="term" value="C:cytoplasm"/>
    <property type="evidence" value="ECO:0000266"/>
    <property type="project" value="PomBase"/>
</dbReference>
<dbReference type="GO" id="GO:0000123">
    <property type="term" value="C:histone acetyltransferase complex"/>
    <property type="evidence" value="ECO:0000266"/>
    <property type="project" value="PomBase"/>
</dbReference>
<dbReference type="GO" id="GO:0005634">
    <property type="term" value="C:nucleus"/>
    <property type="evidence" value="ECO:0007005"/>
    <property type="project" value="PomBase"/>
</dbReference>
<dbReference type="GO" id="GO:0042393">
    <property type="term" value="F:histone binding"/>
    <property type="evidence" value="ECO:0007669"/>
    <property type="project" value="InterPro"/>
</dbReference>
<dbReference type="GO" id="GO:0010485">
    <property type="term" value="F:histone H4 acetyltransferase activity"/>
    <property type="evidence" value="ECO:0000318"/>
    <property type="project" value="GO_Central"/>
</dbReference>
<dbReference type="GO" id="GO:0043997">
    <property type="term" value="F:histone H4K12 acetyltransferase activity"/>
    <property type="evidence" value="ECO:0000314"/>
    <property type="project" value="PomBase"/>
</dbReference>
<dbReference type="GO" id="GO:0043995">
    <property type="term" value="F:histone H4K5 acetyltransferase activity"/>
    <property type="evidence" value="ECO:0000314"/>
    <property type="project" value="PomBase"/>
</dbReference>
<dbReference type="GO" id="GO:0043996">
    <property type="term" value="F:histone H4K8 acetyltransferase activity"/>
    <property type="evidence" value="ECO:0000314"/>
    <property type="project" value="PomBase"/>
</dbReference>
<dbReference type="GO" id="GO:0006281">
    <property type="term" value="P:DNA repair"/>
    <property type="evidence" value="ECO:0007669"/>
    <property type="project" value="UniProtKB-KW"/>
</dbReference>
<dbReference type="GO" id="GO:0031509">
    <property type="term" value="P:subtelomeric heterochromatin formation"/>
    <property type="evidence" value="ECO:0000315"/>
    <property type="project" value="PomBase"/>
</dbReference>
<dbReference type="CDD" id="cd04301">
    <property type="entry name" value="NAT_SF"/>
    <property type="match status" value="1"/>
</dbReference>
<dbReference type="FunFam" id="3.40.630.30:FF:000114">
    <property type="entry name" value="Histone acetyltransferase type B catalytic subunit"/>
    <property type="match status" value="1"/>
</dbReference>
<dbReference type="Gene3D" id="1.10.10.390">
    <property type="match status" value="1"/>
</dbReference>
<dbReference type="Gene3D" id="3.40.630.30">
    <property type="match status" value="1"/>
</dbReference>
<dbReference type="Gene3D" id="3.90.360.10">
    <property type="entry name" value="Histone acetyl transferase 1 (HAT1), N-terminal domain"/>
    <property type="match status" value="1"/>
</dbReference>
<dbReference type="InterPro" id="IPR016181">
    <property type="entry name" value="Acyl_CoA_acyltransferase"/>
</dbReference>
<dbReference type="InterPro" id="IPR000182">
    <property type="entry name" value="GNAT_dom"/>
</dbReference>
<dbReference type="InterPro" id="IPR019467">
    <property type="entry name" value="Hat1_N"/>
</dbReference>
<dbReference type="InterPro" id="IPR037113">
    <property type="entry name" value="Hat1_N_sf"/>
</dbReference>
<dbReference type="InterPro" id="IPR017380">
    <property type="entry name" value="Hist_AcTrfase_B-typ_cat-su"/>
</dbReference>
<dbReference type="InterPro" id="IPR013523">
    <property type="entry name" value="Hist_AcTrfase_HAT1_C"/>
</dbReference>
<dbReference type="PANTHER" id="PTHR12046">
    <property type="entry name" value="HISTONE ACETYLTRANSFERASE TYPE B CATALYTIC SUBUNIT"/>
    <property type="match status" value="1"/>
</dbReference>
<dbReference type="Pfam" id="PF00583">
    <property type="entry name" value="Acetyltransf_1"/>
    <property type="match status" value="1"/>
</dbReference>
<dbReference type="Pfam" id="PF21184">
    <property type="entry name" value="HAT1_C_fung"/>
    <property type="match status" value="1"/>
</dbReference>
<dbReference type="Pfam" id="PF10394">
    <property type="entry name" value="Hat1_N"/>
    <property type="match status" value="1"/>
</dbReference>
<dbReference type="PIRSF" id="PIRSF038084">
    <property type="entry name" value="HAT-B_cat"/>
    <property type="match status" value="1"/>
</dbReference>
<dbReference type="SUPFAM" id="SSF55729">
    <property type="entry name" value="Acyl-CoA N-acyltransferases (Nat)"/>
    <property type="match status" value="1"/>
</dbReference>
<feature type="chain" id="PRO_0000116791" description="Histone acetyltransferase type B catalytic subunit">
    <location>
        <begin position="1"/>
        <end position="378"/>
    </location>
</feature>
<feature type="region of interest" description="Interaction with histone H4 N-terminus" evidence="3">
    <location>
        <begin position="41"/>
        <end position="43"/>
    </location>
</feature>
<feature type="region of interest" description="Interaction with histone H4 N-terminus" evidence="3">
    <location>
        <begin position="183"/>
        <end position="185"/>
    </location>
</feature>
<feature type="active site" description="Proton donor/acceptor" evidence="3">
    <location>
        <position position="238"/>
    </location>
</feature>
<feature type="binding site" evidence="3">
    <location>
        <begin position="203"/>
        <end position="205"/>
    </location>
    <ligand>
        <name>acetyl-CoA</name>
        <dbReference type="ChEBI" id="CHEBI:57288"/>
    </ligand>
</feature>
<feature type="binding site" evidence="3">
    <location>
        <begin position="210"/>
        <end position="216"/>
    </location>
    <ligand>
        <name>acetyl-CoA</name>
        <dbReference type="ChEBI" id="CHEBI:57288"/>
    </ligand>
</feature>
<feature type="site" description="Interaction with histone H4 N-terminus" evidence="2">
    <location>
        <position position="161"/>
    </location>
</feature>